<geneLocation type="mitochondrion"/>
<protein>
    <recommendedName>
        <fullName>Cytochrome b</fullName>
    </recommendedName>
    <alternativeName>
        <fullName>Complex III subunit 3</fullName>
    </alternativeName>
    <alternativeName>
        <fullName>Complex III subunit III</fullName>
    </alternativeName>
    <alternativeName>
        <fullName>Cytochrome b-c1 complex subunit 3</fullName>
    </alternativeName>
    <alternativeName>
        <fullName>Ubiquinol-cytochrome-c reductase complex cytochrome b subunit</fullName>
    </alternativeName>
</protein>
<keyword id="KW-0249">Electron transport</keyword>
<keyword id="KW-0349">Heme</keyword>
<keyword id="KW-0408">Iron</keyword>
<keyword id="KW-0472">Membrane</keyword>
<keyword id="KW-0479">Metal-binding</keyword>
<keyword id="KW-0496">Mitochondrion</keyword>
<keyword id="KW-0999">Mitochondrion inner membrane</keyword>
<keyword id="KW-1185">Reference proteome</keyword>
<keyword id="KW-0679">Respiratory chain</keyword>
<keyword id="KW-0812">Transmembrane</keyword>
<keyword id="KW-1133">Transmembrane helix</keyword>
<keyword id="KW-0813">Transport</keyword>
<keyword id="KW-0830">Ubiquinone</keyword>
<organism>
    <name type="scientific">Gorilla gorilla gorilla</name>
    <name type="common">Western lowland gorilla</name>
    <dbReference type="NCBI Taxonomy" id="9595"/>
    <lineage>
        <taxon>Eukaryota</taxon>
        <taxon>Metazoa</taxon>
        <taxon>Chordata</taxon>
        <taxon>Craniata</taxon>
        <taxon>Vertebrata</taxon>
        <taxon>Euteleostomi</taxon>
        <taxon>Mammalia</taxon>
        <taxon>Eutheria</taxon>
        <taxon>Euarchontoglires</taxon>
        <taxon>Primates</taxon>
        <taxon>Haplorrhini</taxon>
        <taxon>Catarrhini</taxon>
        <taxon>Hominidae</taxon>
        <taxon>Gorilla</taxon>
    </lineage>
</organism>
<dbReference type="EMBL" id="D38114">
    <property type="protein sequence ID" value="BAA85284.1"/>
    <property type="molecule type" value="Genomic_DNA"/>
</dbReference>
<dbReference type="PIR" id="D59154">
    <property type="entry name" value="D59154"/>
</dbReference>
<dbReference type="RefSeq" id="NP_008224.1">
    <property type="nucleotide sequence ID" value="NC_001645.1"/>
</dbReference>
<dbReference type="SMR" id="Q9T9Y3"/>
<dbReference type="FunCoup" id="Q9T9Y3">
    <property type="interactions" value="350"/>
</dbReference>
<dbReference type="STRING" id="9593.ENSGGOP00000022734"/>
<dbReference type="GeneID" id="807889"/>
<dbReference type="CTD" id="4519"/>
<dbReference type="eggNOG" id="KOG4663">
    <property type="taxonomic scope" value="Eukaryota"/>
</dbReference>
<dbReference type="InParanoid" id="Q9T9Y3"/>
<dbReference type="Proteomes" id="UP000001519">
    <property type="component" value="Mitochondrion"/>
</dbReference>
<dbReference type="GO" id="GO:0016020">
    <property type="term" value="C:membrane"/>
    <property type="evidence" value="ECO:0000318"/>
    <property type="project" value="GO_Central"/>
</dbReference>
<dbReference type="GO" id="GO:0005743">
    <property type="term" value="C:mitochondrial inner membrane"/>
    <property type="evidence" value="ECO:0007669"/>
    <property type="project" value="UniProtKB-SubCell"/>
</dbReference>
<dbReference type="GO" id="GO:0045275">
    <property type="term" value="C:respiratory chain complex III"/>
    <property type="evidence" value="ECO:0000318"/>
    <property type="project" value="GO_Central"/>
</dbReference>
<dbReference type="GO" id="GO:0046872">
    <property type="term" value="F:metal ion binding"/>
    <property type="evidence" value="ECO:0007669"/>
    <property type="project" value="UniProtKB-KW"/>
</dbReference>
<dbReference type="GO" id="GO:0008121">
    <property type="term" value="F:ubiquinol-cytochrome-c reductase activity"/>
    <property type="evidence" value="ECO:0007669"/>
    <property type="project" value="InterPro"/>
</dbReference>
<dbReference type="GO" id="GO:0006122">
    <property type="term" value="P:mitochondrial electron transport, ubiquinol to cytochrome c"/>
    <property type="evidence" value="ECO:0000318"/>
    <property type="project" value="GO_Central"/>
</dbReference>
<dbReference type="CDD" id="cd00290">
    <property type="entry name" value="cytochrome_b_C"/>
    <property type="match status" value="1"/>
</dbReference>
<dbReference type="CDD" id="cd00284">
    <property type="entry name" value="Cytochrome_b_N"/>
    <property type="match status" value="1"/>
</dbReference>
<dbReference type="FunFam" id="1.20.810.10:FF:000002">
    <property type="entry name" value="Cytochrome b"/>
    <property type="match status" value="1"/>
</dbReference>
<dbReference type="Gene3D" id="1.20.810.10">
    <property type="entry name" value="Cytochrome Bc1 Complex, Chain C"/>
    <property type="match status" value="1"/>
</dbReference>
<dbReference type="InterPro" id="IPR005798">
    <property type="entry name" value="Cyt_b/b6_C"/>
</dbReference>
<dbReference type="InterPro" id="IPR036150">
    <property type="entry name" value="Cyt_b/b6_C_sf"/>
</dbReference>
<dbReference type="InterPro" id="IPR005797">
    <property type="entry name" value="Cyt_b/b6_N"/>
</dbReference>
<dbReference type="InterPro" id="IPR027387">
    <property type="entry name" value="Cytb/b6-like_sf"/>
</dbReference>
<dbReference type="InterPro" id="IPR030689">
    <property type="entry name" value="Cytochrome_b"/>
</dbReference>
<dbReference type="InterPro" id="IPR048260">
    <property type="entry name" value="Cytochrome_b_C_euk/bac"/>
</dbReference>
<dbReference type="InterPro" id="IPR048259">
    <property type="entry name" value="Cytochrome_b_N_euk/bac"/>
</dbReference>
<dbReference type="InterPro" id="IPR016174">
    <property type="entry name" value="Di-haem_cyt_TM"/>
</dbReference>
<dbReference type="PANTHER" id="PTHR19271">
    <property type="entry name" value="CYTOCHROME B"/>
    <property type="match status" value="1"/>
</dbReference>
<dbReference type="PANTHER" id="PTHR19271:SF16">
    <property type="entry name" value="CYTOCHROME B"/>
    <property type="match status" value="1"/>
</dbReference>
<dbReference type="Pfam" id="PF00032">
    <property type="entry name" value="Cytochrom_B_C"/>
    <property type="match status" value="1"/>
</dbReference>
<dbReference type="Pfam" id="PF00033">
    <property type="entry name" value="Cytochrome_B"/>
    <property type="match status" value="1"/>
</dbReference>
<dbReference type="PIRSF" id="PIRSF038885">
    <property type="entry name" value="COB"/>
    <property type="match status" value="1"/>
</dbReference>
<dbReference type="SUPFAM" id="SSF81648">
    <property type="entry name" value="a domain/subunit of cytochrome bc1 complex (Ubiquinol-cytochrome c reductase)"/>
    <property type="match status" value="1"/>
</dbReference>
<dbReference type="SUPFAM" id="SSF81342">
    <property type="entry name" value="Transmembrane di-heme cytochromes"/>
    <property type="match status" value="1"/>
</dbReference>
<dbReference type="PROSITE" id="PS51003">
    <property type="entry name" value="CYTB_CTER"/>
    <property type="match status" value="1"/>
</dbReference>
<dbReference type="PROSITE" id="PS51002">
    <property type="entry name" value="CYTB_NTER"/>
    <property type="match status" value="1"/>
</dbReference>
<gene>
    <name type="primary">MT-CYB</name>
    <name type="synonym">COB</name>
    <name type="synonym">CYTB</name>
    <name type="synonym">MTCYB</name>
</gene>
<name>CYB_GORGO</name>
<proteinExistence type="inferred from homology"/>
<feature type="chain" id="PRO_0000061011" description="Cytochrome b">
    <location>
        <begin position="1"/>
        <end position="380"/>
    </location>
</feature>
<feature type="transmembrane region" description="Helical" evidence="2">
    <location>
        <begin position="33"/>
        <end position="53"/>
    </location>
</feature>
<feature type="transmembrane region" description="Helical" evidence="2">
    <location>
        <begin position="77"/>
        <end position="98"/>
    </location>
</feature>
<feature type="transmembrane region" description="Helical" evidence="2">
    <location>
        <begin position="113"/>
        <end position="133"/>
    </location>
</feature>
<feature type="transmembrane region" description="Helical" evidence="2">
    <location>
        <begin position="178"/>
        <end position="198"/>
    </location>
</feature>
<feature type="transmembrane region" description="Helical" evidence="2">
    <location>
        <begin position="226"/>
        <end position="246"/>
    </location>
</feature>
<feature type="transmembrane region" description="Helical" evidence="2">
    <location>
        <begin position="288"/>
        <end position="308"/>
    </location>
</feature>
<feature type="transmembrane region" description="Helical" evidence="2">
    <location>
        <begin position="320"/>
        <end position="340"/>
    </location>
</feature>
<feature type="transmembrane region" description="Helical" evidence="2">
    <location>
        <begin position="347"/>
        <end position="367"/>
    </location>
</feature>
<feature type="binding site" description="axial binding residue" evidence="2">
    <location>
        <position position="83"/>
    </location>
    <ligand>
        <name>heme b</name>
        <dbReference type="ChEBI" id="CHEBI:60344"/>
        <label>b562</label>
    </ligand>
    <ligandPart>
        <name>Fe</name>
        <dbReference type="ChEBI" id="CHEBI:18248"/>
    </ligandPart>
</feature>
<feature type="binding site" description="axial binding residue" evidence="2">
    <location>
        <position position="97"/>
    </location>
    <ligand>
        <name>heme b</name>
        <dbReference type="ChEBI" id="CHEBI:60344"/>
        <label>b566</label>
    </ligand>
    <ligandPart>
        <name>Fe</name>
        <dbReference type="ChEBI" id="CHEBI:18248"/>
    </ligandPart>
</feature>
<feature type="binding site" description="axial binding residue" evidence="2">
    <location>
        <position position="182"/>
    </location>
    <ligand>
        <name>heme b</name>
        <dbReference type="ChEBI" id="CHEBI:60344"/>
        <label>b562</label>
    </ligand>
    <ligandPart>
        <name>Fe</name>
        <dbReference type="ChEBI" id="CHEBI:18248"/>
    </ligandPart>
</feature>
<feature type="binding site" description="axial binding residue" evidence="2">
    <location>
        <position position="196"/>
    </location>
    <ligand>
        <name>heme b</name>
        <dbReference type="ChEBI" id="CHEBI:60344"/>
        <label>b566</label>
    </ligand>
    <ligandPart>
        <name>Fe</name>
        <dbReference type="ChEBI" id="CHEBI:18248"/>
    </ligandPart>
</feature>
<feature type="binding site" evidence="2">
    <location>
        <position position="201"/>
    </location>
    <ligand>
        <name>a ubiquinone</name>
        <dbReference type="ChEBI" id="CHEBI:16389"/>
    </ligand>
</feature>
<evidence type="ECO:0000250" key="1"/>
<evidence type="ECO:0000250" key="2">
    <source>
        <dbReference type="UniProtKB" id="P00157"/>
    </source>
</evidence>
<evidence type="ECO:0000255" key="3">
    <source>
        <dbReference type="PROSITE-ProRule" id="PRU00967"/>
    </source>
</evidence>
<evidence type="ECO:0000255" key="4">
    <source>
        <dbReference type="PROSITE-ProRule" id="PRU00968"/>
    </source>
</evidence>
<comment type="function">
    <text evidence="2">Component of the ubiquinol-cytochrome c reductase complex (complex III or cytochrome b-c1 complex) that is part of the mitochondrial respiratory chain. The b-c1 complex mediates electron transfer from ubiquinol to cytochrome c. Contributes to the generation of a proton gradient across the mitochondrial membrane that is then used for ATP synthesis.</text>
</comment>
<comment type="cofactor">
    <cofactor evidence="2">
        <name>heme b</name>
        <dbReference type="ChEBI" id="CHEBI:60344"/>
    </cofactor>
    <text evidence="2">Binds 2 heme b groups non-covalently.</text>
</comment>
<comment type="subunit">
    <text evidence="2">The cytochrome bc1 complex contains 11 subunits: 3 respiratory subunits (MT-CYB, CYC1 and UQCRFS1), 2 core proteins (UQCRC1 and UQCRC2) and 6 low-molecular weight proteins (UQCRH/QCR6, UQCRB/QCR7, UQCRQ/QCR8, UQCR10/QCR9, UQCR11/QCR10 and a cleavage product of UQCRFS1). This cytochrome bc1 complex then forms a dimer.</text>
</comment>
<comment type="subcellular location">
    <subcellularLocation>
        <location evidence="2">Mitochondrion inner membrane</location>
        <topology evidence="2">Multi-pass membrane protein</topology>
    </subcellularLocation>
</comment>
<comment type="miscellaneous">
    <text evidence="1">Heme 1 (or BL or b562) is low-potential and absorbs at about 562 nm, and heme 2 (or BH or b566) is high-potential and absorbs at about 566 nm.</text>
</comment>
<comment type="similarity">
    <text evidence="3 4">Belongs to the cytochrome b family.</text>
</comment>
<comment type="caution">
    <text evidence="2">The full-length protein contains only eight transmembrane helices, not nine as predicted by bioinformatics tools.</text>
</comment>
<reference key="1">
    <citation type="journal article" date="1995" name="Proc. Natl. Acad. Sci. U.S.A.">
        <title>Recent African origin of modern humans revealed by complete sequences of hominoid mitochondrial DNAs.</title>
        <authorList>
            <person name="Horai S."/>
            <person name="Hayasaka K."/>
            <person name="Kondo R."/>
            <person name="Tsugane K."/>
            <person name="Takahata N."/>
        </authorList>
    </citation>
    <scope>NUCLEOTIDE SEQUENCE [GENOMIC DNA]</scope>
</reference>
<accession>Q9T9Y3</accession>
<sequence length="380" mass="42954">MTPMRKTNPLAKLINHSFIDLPTPSNISTWWNFGSLLGACLILQITTGLFLAMHYSPDASTAFSSIAHITRDVNYGWTIRYLHANGASMFFICLFLHIGRGLYYGSFLHQETWNIGIILLLTTMAAAFMGYVLPWGQMSFWGATVITNLLSAIPYIGTDLVQWVWGGYSVDSPTLTRFFTFHFILPFIITALTTLHLLFLHETGSNNPLGIPSHSDKITFHPYYTIKDILGLFLFLLTLMTLTLFSPDLLGDPDNYTLANPLSTPPHIKPEWYFLFAYAILRSVPNKLGGVLALLLSILILAMIPILHMSKQQSMMFRPLSQLLYWFLIADLFTLTWIGGQPVSYPFITIGQVASVLYFTTILFLMPITSLIENKMLKWT</sequence>